<organism>
    <name type="scientific">Arabidopsis thaliana</name>
    <name type="common">Mouse-ear cress</name>
    <dbReference type="NCBI Taxonomy" id="3702"/>
    <lineage>
        <taxon>Eukaryota</taxon>
        <taxon>Viridiplantae</taxon>
        <taxon>Streptophyta</taxon>
        <taxon>Embryophyta</taxon>
        <taxon>Tracheophyta</taxon>
        <taxon>Spermatophyta</taxon>
        <taxon>Magnoliopsida</taxon>
        <taxon>eudicotyledons</taxon>
        <taxon>Gunneridae</taxon>
        <taxon>Pentapetalae</taxon>
        <taxon>rosids</taxon>
        <taxon>malvids</taxon>
        <taxon>Brassicales</taxon>
        <taxon>Brassicaceae</taxon>
        <taxon>Camelineae</taxon>
        <taxon>Arabidopsis</taxon>
    </lineage>
</organism>
<name>HEI10_ARATH</name>
<evidence type="ECO:0000255" key="1"/>
<evidence type="ECO:0000256" key="2">
    <source>
        <dbReference type="SAM" id="MobiDB-lite"/>
    </source>
</evidence>
<evidence type="ECO:0000269" key="3">
    <source>
    </source>
</evidence>
<evidence type="ECO:0000305" key="4"/>
<protein>
    <recommendedName>
        <fullName>E3 ubiquitin-protein ligase CCNB1IP1 homolog</fullName>
        <ecNumber>2.3.2.27</ecNumber>
    </recommendedName>
    <alternativeName>
        <fullName>RING finger-containing protein HEI10</fullName>
    </alternativeName>
    <alternativeName>
        <fullName evidence="4">RING-type E3 ubiquitin transferase HEI10</fullName>
    </alternativeName>
</protein>
<proteinExistence type="evidence at transcript level"/>
<dbReference type="EC" id="2.3.2.27"/>
<dbReference type="EMBL" id="AC018748">
    <property type="protein sequence ID" value="AAF78440.1"/>
    <property type="status" value="ALT_SEQ"/>
    <property type="molecule type" value="Genomic_DNA"/>
</dbReference>
<dbReference type="EMBL" id="AC024260">
    <property type="protein sequence ID" value="AAG51983.1"/>
    <property type="status" value="ALT_SEQ"/>
    <property type="molecule type" value="Genomic_DNA"/>
</dbReference>
<dbReference type="EMBL" id="CP002684">
    <property type="protein sequence ID" value="AEE32948.1"/>
    <property type="molecule type" value="Genomic_DNA"/>
</dbReference>
<dbReference type="PIR" id="A96575">
    <property type="entry name" value="A96575"/>
</dbReference>
<dbReference type="RefSeq" id="NP_175754.2">
    <property type="nucleotide sequence ID" value="NM_104227.2"/>
</dbReference>
<dbReference type="SMR" id="F4HRI2"/>
<dbReference type="BioGRID" id="27009">
    <property type="interactions" value="2"/>
</dbReference>
<dbReference type="FunCoup" id="F4HRI2">
    <property type="interactions" value="439"/>
</dbReference>
<dbReference type="STRING" id="3702.F4HRI2"/>
<dbReference type="GlyGen" id="F4HRI2">
    <property type="glycosylation" value="1 site"/>
</dbReference>
<dbReference type="PaxDb" id="3702-AT1G53490.1"/>
<dbReference type="EnsemblPlants" id="AT1G53490.1">
    <property type="protein sequence ID" value="AT1G53490.1"/>
    <property type="gene ID" value="AT1G53490"/>
</dbReference>
<dbReference type="GeneID" id="841784"/>
<dbReference type="Gramene" id="AT1G53490.1">
    <property type="protein sequence ID" value="AT1G53490.1"/>
    <property type="gene ID" value="AT1G53490"/>
</dbReference>
<dbReference type="KEGG" id="ath:AT1G53490"/>
<dbReference type="Araport" id="AT1G53490"/>
<dbReference type="TAIR" id="AT1G53490">
    <property type="gene designation" value="HEI10"/>
</dbReference>
<dbReference type="eggNOG" id="ENOG502RMFV">
    <property type="taxonomic scope" value="Eukaryota"/>
</dbReference>
<dbReference type="HOGENOM" id="CLU_052740_0_0_1"/>
<dbReference type="InParanoid" id="F4HRI2"/>
<dbReference type="UniPathway" id="UPA00143"/>
<dbReference type="PRO" id="PR:F4HRI2"/>
<dbReference type="Proteomes" id="UP000006548">
    <property type="component" value="Chromosome 1"/>
</dbReference>
<dbReference type="ExpressionAtlas" id="F4HRI2">
    <property type="expression patterns" value="baseline and differential"/>
</dbReference>
<dbReference type="GO" id="GO:0005712">
    <property type="term" value="C:chiasma"/>
    <property type="evidence" value="ECO:0000250"/>
    <property type="project" value="UniProtKB"/>
</dbReference>
<dbReference type="GO" id="GO:0005694">
    <property type="term" value="C:chromosome"/>
    <property type="evidence" value="ECO:0000314"/>
    <property type="project" value="UniProtKB"/>
</dbReference>
<dbReference type="GO" id="GO:0016740">
    <property type="term" value="F:transferase activity"/>
    <property type="evidence" value="ECO:0007669"/>
    <property type="project" value="UniProtKB-KW"/>
</dbReference>
<dbReference type="GO" id="GO:0008270">
    <property type="term" value="F:zinc ion binding"/>
    <property type="evidence" value="ECO:0007669"/>
    <property type="project" value="UniProtKB-KW"/>
</dbReference>
<dbReference type="GO" id="GO:0051026">
    <property type="term" value="P:chiasma assembly"/>
    <property type="evidence" value="ECO:0000315"/>
    <property type="project" value="TAIR"/>
</dbReference>
<dbReference type="GO" id="GO:0035825">
    <property type="term" value="P:homologous recombination"/>
    <property type="evidence" value="ECO:0000315"/>
    <property type="project" value="TAIR"/>
</dbReference>
<dbReference type="GO" id="GO:0051321">
    <property type="term" value="P:meiotic cell cycle"/>
    <property type="evidence" value="ECO:0000315"/>
    <property type="project" value="TAIR"/>
</dbReference>
<dbReference type="GO" id="GO:0016567">
    <property type="term" value="P:protein ubiquitination"/>
    <property type="evidence" value="ECO:0007669"/>
    <property type="project" value="UniProtKB-UniPathway"/>
</dbReference>
<dbReference type="GO" id="GO:0007131">
    <property type="term" value="P:reciprocal meiotic recombination"/>
    <property type="evidence" value="ECO:0000315"/>
    <property type="project" value="UniProtKB"/>
</dbReference>
<dbReference type="FunFam" id="3.30.40.10:FF:000405">
    <property type="entry name" value="E3 ubiquitin-protein ligase CCNB1IP1 homolog"/>
    <property type="match status" value="1"/>
</dbReference>
<dbReference type="Gene3D" id="1.20.5.1000">
    <property type="entry name" value="arf6 gtpase in complex with a specific effector, jip4"/>
    <property type="match status" value="1"/>
</dbReference>
<dbReference type="Gene3D" id="3.30.40.10">
    <property type="entry name" value="Zinc/RING finger domain, C3HC4 (zinc finger)"/>
    <property type="match status" value="1"/>
</dbReference>
<dbReference type="InterPro" id="IPR055328">
    <property type="entry name" value="HEI10-like"/>
</dbReference>
<dbReference type="InterPro" id="IPR001841">
    <property type="entry name" value="Znf_RING"/>
</dbReference>
<dbReference type="InterPro" id="IPR013083">
    <property type="entry name" value="Znf_RING/FYVE/PHD"/>
</dbReference>
<dbReference type="PANTHER" id="PTHR47384">
    <property type="entry name" value="E3 UBIQUITIN-PROTEIN LIGASE CCNB1IP1 HOMOLOG"/>
    <property type="match status" value="1"/>
</dbReference>
<dbReference type="PANTHER" id="PTHR47384:SF2">
    <property type="entry name" value="E3 UBIQUITIN-PROTEIN LIGASE CCNB1IP1 HOMOLOG"/>
    <property type="match status" value="1"/>
</dbReference>
<dbReference type="Pfam" id="PF14634">
    <property type="entry name" value="zf-RING_5"/>
    <property type="match status" value="1"/>
</dbReference>
<dbReference type="SUPFAM" id="SSF57850">
    <property type="entry name" value="RING/U-box"/>
    <property type="match status" value="1"/>
</dbReference>
<gene>
    <name type="primary">HEI10</name>
    <name type="ordered locus">At1g53490</name>
    <name type="ORF">F22G10.16</name>
    <name type="ORF">T3F20.19</name>
</gene>
<sequence length="304" mass="34765">MRCNACWRDLEGRAISTTCGHLLCTEDASKILSNDGACPICDQVLSKSLMKPVDINPNEEWINMAMAGISPQILMKSAYRSVMFYIAQRDLEMQYKMNRVVAQCRQKCEGMQAKFSEKMEQVHTAYQKMGKRCQMMEQEVENLTKDKQELQEKFSEKSRQKRKLDEMYDQLRSEYESVKRTAIQPANNFYPRHQEPDFFSNPAVNMMENRETIRKDRSFFSPATPGPKDEIWPARQNSSNSGPFDISTDSPAIPSDLGNRRAGRGHPVYGGGGTANPQSTLRNLILSPIKRSQLSRSRPQLFTL</sequence>
<feature type="chain" id="PRO_0000425730" description="E3 ubiquitin-protein ligase CCNB1IP1 homolog">
    <location>
        <begin position="1"/>
        <end position="304"/>
    </location>
</feature>
<feature type="zinc finger region" description="RING-type; degenerate">
    <location>
        <begin position="3"/>
        <end position="42"/>
    </location>
</feature>
<feature type="region of interest" description="Disordered" evidence="2">
    <location>
        <begin position="218"/>
        <end position="279"/>
    </location>
</feature>
<feature type="coiled-coil region" evidence="1">
    <location>
        <begin position="124"/>
        <end position="184"/>
    </location>
</feature>
<feature type="compositionally biased region" description="Polar residues" evidence="2">
    <location>
        <begin position="235"/>
        <end position="250"/>
    </location>
</feature>
<keyword id="KW-0158">Chromosome</keyword>
<keyword id="KW-0175">Coiled coil</keyword>
<keyword id="KW-0233">DNA recombination</keyword>
<keyword id="KW-0469">Meiosis</keyword>
<keyword id="KW-0479">Metal-binding</keyword>
<keyword id="KW-0539">Nucleus</keyword>
<keyword id="KW-1185">Reference proteome</keyword>
<keyword id="KW-0808">Transferase</keyword>
<keyword id="KW-0833">Ubl conjugation pathway</keyword>
<keyword id="KW-0862">Zinc</keyword>
<keyword id="KW-0863">Zinc-finger</keyword>
<accession>F4HRI2</accession>
<accession>Q9C8L1</accession>
<accession>Q9LPG5</accession>
<reference key="1">
    <citation type="journal article" date="2000" name="Nature">
        <title>Sequence and analysis of chromosome 1 of the plant Arabidopsis thaliana.</title>
        <authorList>
            <person name="Theologis A."/>
            <person name="Ecker J.R."/>
            <person name="Palm C.J."/>
            <person name="Federspiel N.A."/>
            <person name="Kaul S."/>
            <person name="White O."/>
            <person name="Alonso J."/>
            <person name="Altafi H."/>
            <person name="Araujo R."/>
            <person name="Bowman C.L."/>
            <person name="Brooks S.Y."/>
            <person name="Buehler E."/>
            <person name="Chan A."/>
            <person name="Chao Q."/>
            <person name="Chen H."/>
            <person name="Cheuk R.F."/>
            <person name="Chin C.W."/>
            <person name="Chung M.K."/>
            <person name="Conn L."/>
            <person name="Conway A.B."/>
            <person name="Conway A.R."/>
            <person name="Creasy T.H."/>
            <person name="Dewar K."/>
            <person name="Dunn P."/>
            <person name="Etgu P."/>
            <person name="Feldblyum T.V."/>
            <person name="Feng J.-D."/>
            <person name="Fong B."/>
            <person name="Fujii C.Y."/>
            <person name="Gill J.E."/>
            <person name="Goldsmith A.D."/>
            <person name="Haas B."/>
            <person name="Hansen N.F."/>
            <person name="Hughes B."/>
            <person name="Huizar L."/>
            <person name="Hunter J.L."/>
            <person name="Jenkins J."/>
            <person name="Johnson-Hopson C."/>
            <person name="Khan S."/>
            <person name="Khaykin E."/>
            <person name="Kim C.J."/>
            <person name="Koo H.L."/>
            <person name="Kremenetskaia I."/>
            <person name="Kurtz D.B."/>
            <person name="Kwan A."/>
            <person name="Lam B."/>
            <person name="Langin-Hooper S."/>
            <person name="Lee A."/>
            <person name="Lee J.M."/>
            <person name="Lenz C.A."/>
            <person name="Li J.H."/>
            <person name="Li Y.-P."/>
            <person name="Lin X."/>
            <person name="Liu S.X."/>
            <person name="Liu Z.A."/>
            <person name="Luros J.S."/>
            <person name="Maiti R."/>
            <person name="Marziali A."/>
            <person name="Militscher J."/>
            <person name="Miranda M."/>
            <person name="Nguyen M."/>
            <person name="Nierman W.C."/>
            <person name="Osborne B.I."/>
            <person name="Pai G."/>
            <person name="Peterson J."/>
            <person name="Pham P.K."/>
            <person name="Rizzo M."/>
            <person name="Rooney T."/>
            <person name="Rowley D."/>
            <person name="Sakano H."/>
            <person name="Salzberg S.L."/>
            <person name="Schwartz J.R."/>
            <person name="Shinn P."/>
            <person name="Southwick A.M."/>
            <person name="Sun H."/>
            <person name="Tallon L.J."/>
            <person name="Tambunga G."/>
            <person name="Toriumi M.J."/>
            <person name="Town C.D."/>
            <person name="Utterback T."/>
            <person name="Van Aken S."/>
            <person name="Vaysberg M."/>
            <person name="Vysotskaia V.S."/>
            <person name="Walker M."/>
            <person name="Wu D."/>
            <person name="Yu G."/>
            <person name="Fraser C.M."/>
            <person name="Venter J.C."/>
            <person name="Davis R.W."/>
        </authorList>
    </citation>
    <scope>NUCLEOTIDE SEQUENCE [LARGE SCALE GENOMIC DNA]</scope>
    <source>
        <strain>cv. Columbia</strain>
    </source>
</reference>
<reference key="2">
    <citation type="journal article" date="2017" name="Plant J.">
        <title>Araport11: a complete reannotation of the Arabidopsis thaliana reference genome.</title>
        <authorList>
            <person name="Cheng C.Y."/>
            <person name="Krishnakumar V."/>
            <person name="Chan A.P."/>
            <person name="Thibaud-Nissen F."/>
            <person name="Schobel S."/>
            <person name="Town C.D."/>
        </authorList>
    </citation>
    <scope>GENOME REANNOTATION</scope>
    <source>
        <strain>cv. Columbia</strain>
    </source>
</reference>
<reference key="3">
    <citation type="journal article" date="2012" name="PLoS Genet.">
        <title>The Arabidopsis HEI10 is a new ZMM protein related to Zip3.</title>
        <authorList>
            <person name="Chelysheva L."/>
            <person name="Vezon D."/>
            <person name="Chambon A."/>
            <person name="Gendrot G."/>
            <person name="Pereira L."/>
            <person name="Lemhemdi A."/>
            <person name="Vrielynck N."/>
            <person name="Le Guin S."/>
            <person name="Novatchkova M."/>
            <person name="Grelon M."/>
        </authorList>
    </citation>
    <scope>FUNCTION</scope>
    <scope>DISRUPTION PHENOTYPE</scope>
    <scope>SUBCELLULAR LOCATION</scope>
    <scope>TISSUE SPECIFICITY</scope>
    <source>
        <strain>cv. Columbia</strain>
        <strain>cv. Wassilewskija-4</strain>
    </source>
</reference>
<comment type="function">
    <text evidence="3">Ubiquitin E3 ligase required for class I crossover (CO) formation during meiosis.</text>
</comment>
<comment type="catalytic activity">
    <reaction>
        <text>S-ubiquitinyl-[E2 ubiquitin-conjugating enzyme]-L-cysteine + [acceptor protein]-L-lysine = [E2 ubiquitin-conjugating enzyme]-L-cysteine + N(6)-ubiquitinyl-[acceptor protein]-L-lysine.</text>
        <dbReference type="EC" id="2.3.2.27"/>
    </reaction>
</comment>
<comment type="pathway">
    <text>Protein modification; protein ubiquitination.</text>
</comment>
<comment type="subcellular location">
    <subcellularLocation>
        <location evidence="3">Nucleus</location>
    </subcellularLocation>
    <subcellularLocation>
        <location evidence="3">Chromosome</location>
    </subcellularLocation>
    <text>Dynamic localization on the meiotic chromosomes. Present as numerous foci on the chromosome axes and the synaptonemal complex central element until pachytene. From pachytene to diakinesis, restricted to a limited number of sites that correspond to class I crossovers.</text>
</comment>
<comment type="tissue specificity">
    <text evidence="3">Expressed mostly in flower buds and roots.</text>
</comment>
<comment type="disruption phenotype">
    <text evidence="3">Normal vegetative growth but fertility defects leading to reduced seed number per silique, due to abortion of male and female gametophytes characterized by abnormal tetrahedral structure becoming either asymmetric tetrads or polyads containing more than four products, because of impaired class I crossover (CO) formation during meiosis.</text>
</comment>
<comment type="sequence caution" evidence="4">
    <conflict type="erroneous gene model prediction">
        <sequence resource="EMBL-CDS" id="AAF78440"/>
    </conflict>
</comment>
<comment type="sequence caution" evidence="4">
    <conflict type="erroneous gene model prediction">
        <sequence resource="EMBL-CDS" id="AAG51983"/>
    </conflict>
</comment>